<reference key="1">
    <citation type="journal article" date="1995" name="Development">
        <title>Neural crest cell-cell adhesion controlled by sequential and subpopulation-specific expression of novel cadherins.</title>
        <authorList>
            <person name="Nakagawa S."/>
            <person name="Takeichi M."/>
        </authorList>
    </citation>
    <scope>NUCLEOTIDE SEQUENCE [MRNA]</scope>
    <source>
        <strain>White leghorn</strain>
        <tissue>Brain</tissue>
    </source>
</reference>
<feature type="signal peptide" evidence="2">
    <location>
        <begin position="1"/>
        <end position="27"/>
    </location>
</feature>
<feature type="propeptide" id="PRO_0000003771" evidence="2">
    <location>
        <begin position="28"/>
        <end position="47"/>
    </location>
</feature>
<feature type="chain" id="PRO_0000003772" description="Cadherin-7">
    <location>
        <begin position="48"/>
        <end position="785"/>
    </location>
</feature>
<feature type="topological domain" description="Extracellular" evidence="2">
    <location>
        <begin position="48"/>
        <end position="607"/>
    </location>
</feature>
<feature type="transmembrane region" description="Helical" evidence="2">
    <location>
        <begin position="608"/>
        <end position="628"/>
    </location>
</feature>
<feature type="topological domain" description="Cytoplasmic" evidence="2">
    <location>
        <begin position="629"/>
        <end position="785"/>
    </location>
</feature>
<feature type="domain" description="Cadherin 1" evidence="3">
    <location>
        <begin position="49"/>
        <end position="153"/>
    </location>
</feature>
<feature type="domain" description="Cadherin 2" evidence="3">
    <location>
        <begin position="154"/>
        <end position="262"/>
    </location>
</feature>
<feature type="domain" description="Cadherin 3" evidence="3">
    <location>
        <begin position="263"/>
        <end position="377"/>
    </location>
</feature>
<feature type="domain" description="Cadherin 4" evidence="3">
    <location>
        <begin position="378"/>
        <end position="482"/>
    </location>
</feature>
<feature type="domain" description="Cadherin 5" evidence="3">
    <location>
        <begin position="482"/>
        <end position="599"/>
    </location>
</feature>
<feature type="glycosylation site" description="N-linked (GlcNAc...) asparagine" evidence="2">
    <location>
        <position position="449"/>
    </location>
</feature>
<feature type="glycosylation site" description="N-linked (GlcNAc...) asparagine" evidence="2">
    <location>
        <position position="530"/>
    </location>
</feature>
<dbReference type="EMBL" id="D42150">
    <property type="protein sequence ID" value="BAA07721.1"/>
    <property type="molecule type" value="mRNA"/>
</dbReference>
<dbReference type="PIR" id="I50180">
    <property type="entry name" value="I50180"/>
</dbReference>
<dbReference type="RefSeq" id="NP_989518.2">
    <property type="nucleotide sequence ID" value="NM_204187.2"/>
</dbReference>
<dbReference type="SMR" id="Q90763"/>
<dbReference type="FunCoup" id="Q90763">
    <property type="interactions" value="67"/>
</dbReference>
<dbReference type="STRING" id="9031.ENSGALP00000022341"/>
<dbReference type="GlyCosmos" id="Q90763">
    <property type="glycosylation" value="2 sites, No reported glycans"/>
</dbReference>
<dbReference type="GlyGen" id="Q90763">
    <property type="glycosylation" value="2 sites"/>
</dbReference>
<dbReference type="PaxDb" id="9031-ENSGALP00000022341"/>
<dbReference type="GeneID" id="374007"/>
<dbReference type="KEGG" id="gga:374007"/>
<dbReference type="CTD" id="1005"/>
<dbReference type="VEuPathDB" id="HostDB:geneid_374007"/>
<dbReference type="eggNOG" id="KOG3594">
    <property type="taxonomic scope" value="Eukaryota"/>
</dbReference>
<dbReference type="InParanoid" id="Q90763"/>
<dbReference type="OrthoDB" id="6250271at2759"/>
<dbReference type="PhylomeDB" id="Q90763"/>
<dbReference type="PRO" id="PR:Q90763"/>
<dbReference type="Proteomes" id="UP000000539">
    <property type="component" value="Unassembled WGS sequence"/>
</dbReference>
<dbReference type="GO" id="GO:0005912">
    <property type="term" value="C:adherens junction"/>
    <property type="evidence" value="ECO:0000318"/>
    <property type="project" value="GO_Central"/>
</dbReference>
<dbReference type="GO" id="GO:0016342">
    <property type="term" value="C:catenin complex"/>
    <property type="evidence" value="ECO:0000318"/>
    <property type="project" value="GO_Central"/>
</dbReference>
<dbReference type="GO" id="GO:0005886">
    <property type="term" value="C:plasma membrane"/>
    <property type="evidence" value="ECO:0000314"/>
    <property type="project" value="AgBase"/>
</dbReference>
<dbReference type="GO" id="GO:0008013">
    <property type="term" value="F:beta-catenin binding"/>
    <property type="evidence" value="ECO:0000318"/>
    <property type="project" value="GO_Central"/>
</dbReference>
<dbReference type="GO" id="GO:0045296">
    <property type="term" value="F:cadherin binding"/>
    <property type="evidence" value="ECO:0000318"/>
    <property type="project" value="GO_Central"/>
</dbReference>
<dbReference type="GO" id="GO:0005509">
    <property type="term" value="F:calcium ion binding"/>
    <property type="evidence" value="ECO:0007669"/>
    <property type="project" value="InterPro"/>
</dbReference>
<dbReference type="GO" id="GO:0034332">
    <property type="term" value="P:adherens junction organization"/>
    <property type="evidence" value="ECO:0000318"/>
    <property type="project" value="GO_Central"/>
</dbReference>
<dbReference type="GO" id="GO:0016339">
    <property type="term" value="P:calcium-dependent cell-cell adhesion via plasma membrane cell adhesion molecules"/>
    <property type="evidence" value="ECO:0000318"/>
    <property type="project" value="GO_Central"/>
</dbReference>
<dbReference type="GO" id="GO:0001502">
    <property type="term" value="P:cartilage condensation"/>
    <property type="evidence" value="ECO:0000315"/>
    <property type="project" value="AgBase"/>
</dbReference>
<dbReference type="GO" id="GO:0016477">
    <property type="term" value="P:cell migration"/>
    <property type="evidence" value="ECO:0000315"/>
    <property type="project" value="AgBase"/>
</dbReference>
<dbReference type="GO" id="GO:0000902">
    <property type="term" value="P:cell morphogenesis"/>
    <property type="evidence" value="ECO:0000318"/>
    <property type="project" value="GO_Central"/>
</dbReference>
<dbReference type="GO" id="GO:0044331">
    <property type="term" value="P:cell-cell adhesion mediated by cadherin"/>
    <property type="evidence" value="ECO:0000318"/>
    <property type="project" value="GO_Central"/>
</dbReference>
<dbReference type="GO" id="GO:0007043">
    <property type="term" value="P:cell-cell junction assembly"/>
    <property type="evidence" value="ECO:0000318"/>
    <property type="project" value="GO_Central"/>
</dbReference>
<dbReference type="GO" id="GO:0060591">
    <property type="term" value="P:chondroblast differentiation"/>
    <property type="evidence" value="ECO:0000270"/>
    <property type="project" value="AgBase"/>
</dbReference>
<dbReference type="GO" id="GO:0007156">
    <property type="term" value="P:homophilic cell adhesion via plasma membrane adhesion molecules"/>
    <property type="evidence" value="ECO:0007669"/>
    <property type="project" value="InterPro"/>
</dbReference>
<dbReference type="GO" id="GO:0060173">
    <property type="term" value="P:limb development"/>
    <property type="evidence" value="ECO:0000270"/>
    <property type="project" value="AgBase"/>
</dbReference>
<dbReference type="GO" id="GO:0036032">
    <property type="term" value="P:neural crest cell delamination"/>
    <property type="evidence" value="ECO:0000315"/>
    <property type="project" value="AgBase"/>
</dbReference>
<dbReference type="GO" id="GO:0001841">
    <property type="term" value="P:neural tube formation"/>
    <property type="evidence" value="ECO:0000315"/>
    <property type="project" value="AgBase"/>
</dbReference>
<dbReference type="GO" id="GO:0042060">
    <property type="term" value="P:wound healing"/>
    <property type="evidence" value="ECO:0000315"/>
    <property type="project" value="AgBase"/>
</dbReference>
<dbReference type="CDD" id="cd11304">
    <property type="entry name" value="Cadherin_repeat"/>
    <property type="match status" value="5"/>
</dbReference>
<dbReference type="FunFam" id="4.10.900.10:FF:000001">
    <property type="entry name" value="Cadherin 2"/>
    <property type="match status" value="1"/>
</dbReference>
<dbReference type="FunFam" id="2.60.40.60:FF:000008">
    <property type="entry name" value="Cadherin 24"/>
    <property type="match status" value="1"/>
</dbReference>
<dbReference type="FunFam" id="2.60.40.60:FF:000009">
    <property type="entry name" value="Cadherin 24"/>
    <property type="match status" value="1"/>
</dbReference>
<dbReference type="FunFam" id="2.60.40.60:FF:000012">
    <property type="entry name" value="Cadherin 24"/>
    <property type="match status" value="1"/>
</dbReference>
<dbReference type="FunFam" id="2.60.40.60:FF:000017">
    <property type="entry name" value="Cadherin 24"/>
    <property type="match status" value="1"/>
</dbReference>
<dbReference type="FunFam" id="2.60.40.60:FF:000014">
    <property type="entry name" value="Cadherin 8"/>
    <property type="match status" value="1"/>
</dbReference>
<dbReference type="Gene3D" id="2.60.40.60">
    <property type="entry name" value="Cadherins"/>
    <property type="match status" value="5"/>
</dbReference>
<dbReference type="Gene3D" id="4.10.900.10">
    <property type="entry name" value="TCF3-CBD (Catenin binding domain)"/>
    <property type="match status" value="1"/>
</dbReference>
<dbReference type="InterPro" id="IPR039808">
    <property type="entry name" value="Cadherin"/>
</dbReference>
<dbReference type="InterPro" id="IPR002126">
    <property type="entry name" value="Cadherin-like_dom"/>
</dbReference>
<dbReference type="InterPro" id="IPR015919">
    <property type="entry name" value="Cadherin-like_sf"/>
</dbReference>
<dbReference type="InterPro" id="IPR020894">
    <property type="entry name" value="Cadherin_CS"/>
</dbReference>
<dbReference type="InterPro" id="IPR000233">
    <property type="entry name" value="Cadherin_Y-type_LIR"/>
</dbReference>
<dbReference type="InterPro" id="IPR027397">
    <property type="entry name" value="Catenin-bd_sf"/>
</dbReference>
<dbReference type="PANTHER" id="PTHR24027">
    <property type="entry name" value="CADHERIN-23"/>
    <property type="match status" value="1"/>
</dbReference>
<dbReference type="PANTHER" id="PTHR24027:SF91">
    <property type="entry name" value="CADHERIN-7"/>
    <property type="match status" value="1"/>
</dbReference>
<dbReference type="Pfam" id="PF01049">
    <property type="entry name" value="CADH_Y-type_LIR"/>
    <property type="match status" value="1"/>
</dbReference>
<dbReference type="Pfam" id="PF00028">
    <property type="entry name" value="Cadherin"/>
    <property type="match status" value="5"/>
</dbReference>
<dbReference type="PRINTS" id="PR00205">
    <property type="entry name" value="CADHERIN"/>
</dbReference>
<dbReference type="SMART" id="SM00112">
    <property type="entry name" value="CA"/>
    <property type="match status" value="5"/>
</dbReference>
<dbReference type="SUPFAM" id="SSF49313">
    <property type="entry name" value="Cadherin-like"/>
    <property type="match status" value="5"/>
</dbReference>
<dbReference type="PROSITE" id="PS00232">
    <property type="entry name" value="CADHERIN_1"/>
    <property type="match status" value="3"/>
</dbReference>
<dbReference type="PROSITE" id="PS50268">
    <property type="entry name" value="CADHERIN_2"/>
    <property type="match status" value="5"/>
</dbReference>
<protein>
    <recommendedName>
        <fullName>Cadherin-7</fullName>
    </recommendedName>
</protein>
<organism>
    <name type="scientific">Gallus gallus</name>
    <name type="common">Chicken</name>
    <dbReference type="NCBI Taxonomy" id="9031"/>
    <lineage>
        <taxon>Eukaryota</taxon>
        <taxon>Metazoa</taxon>
        <taxon>Chordata</taxon>
        <taxon>Craniata</taxon>
        <taxon>Vertebrata</taxon>
        <taxon>Euteleostomi</taxon>
        <taxon>Archelosauria</taxon>
        <taxon>Archosauria</taxon>
        <taxon>Dinosauria</taxon>
        <taxon>Saurischia</taxon>
        <taxon>Theropoda</taxon>
        <taxon>Coelurosauria</taxon>
        <taxon>Aves</taxon>
        <taxon>Neognathae</taxon>
        <taxon>Galloanserae</taxon>
        <taxon>Galliformes</taxon>
        <taxon>Phasianidae</taxon>
        <taxon>Phasianinae</taxon>
        <taxon>Gallus</taxon>
    </lineage>
</organism>
<name>CADH7_CHICK</name>
<comment type="function">
    <text>Cadherins are calcium-dependent cell adhesion proteins. They preferentially interact with themselves in a homophilic manner in connecting cells; cadherins may thus contribute to the sorting of heterogeneous cell types.</text>
</comment>
<comment type="subcellular location">
    <subcellularLocation>
        <location>Cell membrane</location>
        <topology>Single-pass type I membrane protein</topology>
    </subcellularLocation>
</comment>
<comment type="domain">
    <text evidence="1">Three calcium ions are usually bound at the interface of each cadherin domain and rigidify the connections, imparting a strong curvature to the full-length ectodomain.</text>
</comment>
<gene>
    <name type="primary">CDH7</name>
</gene>
<proteinExistence type="evidence at transcript level"/>
<keyword id="KW-0106">Calcium</keyword>
<keyword id="KW-0130">Cell adhesion</keyword>
<keyword id="KW-1003">Cell membrane</keyword>
<keyword id="KW-0165">Cleavage on pair of basic residues</keyword>
<keyword id="KW-0325">Glycoprotein</keyword>
<keyword id="KW-0472">Membrane</keyword>
<keyword id="KW-0479">Metal-binding</keyword>
<keyword id="KW-1185">Reference proteome</keyword>
<keyword id="KW-0677">Repeat</keyword>
<keyword id="KW-0732">Signal</keyword>
<keyword id="KW-0812">Transmembrane</keyword>
<keyword id="KW-1133">Transmembrane helix</keyword>
<evidence type="ECO:0000250" key="1"/>
<evidence type="ECO:0000255" key="2"/>
<evidence type="ECO:0000255" key="3">
    <source>
        <dbReference type="PROSITE-ProRule" id="PRU00043"/>
    </source>
</evidence>
<accession>Q90763</accession>
<sequence length="785" mass="87172">MKLGKVEFCHLLQIIALFLCLSGMNQAEPSRSRSKPYFQSGRTRTKRSWVWNQFFVLEEYMGSDPLYVGKLHSDVDKGDGSIKYILSGEGASSIFIIDENTGDIHATKRLDREEQAYYTLRAQAHDRLTNKPVEPESEFVIKIQDINDNEPKFLDGPYTAGVPEMSPVGTSVVQVTATDADDPTYGNSARVVYSILQGQPYFSVEPKTGIIKTALPNMDREAKDQYLLVIQAKDMVGQNGGLSGTTSVTVTLTDVNDNPPRFPRRSYQYNVPESLPLASVVARIKAADADVGPNAEMEYKIVDGDGLGVFKISVDKDTQEGIITIQKELDFEAKTSYTLRIEAANMHVDPRFLSLGPFSDMTTVKIIVEDVDEPPVFTSRLYSMVVSEAAKVGTIIGTVAAHDPDASNSPVRYSIDRNTDLERYFNIDANSGVITTAKSLDRETNAVHNITVLAMESQNPAQIGRGYVAITILDINDNAPEFAMEYETTVCENAQPGQIIQKISAIDKDDPPNGHQFYFSLTAEAANNHNFTLQDNKDNTATVLTRRNGFRRQEQSVFYLPIFIVDSGSPSLSSTNTLTIRVCDCDADGIAQTCNAEAYILPAGLSTGALIAILACVLTLLVLVLLIVTMRRRKKEPLIFDEERDIRENIVRYDDEGGGEEDTEAFDMAALRNLNIIRDTKTRRDVTPEIQFLSRPTFKSIPDNVIFREFIWERLKEADVDPCAPPYDSLQTYAFEGNGSVAESLSSLDSISSNSDQNYDYLSDWGPRFKRLADMYGSGPDCLYS</sequence>